<organism>
    <name type="scientific">Mus musculus</name>
    <name type="common">Mouse</name>
    <dbReference type="NCBI Taxonomy" id="10090"/>
    <lineage>
        <taxon>Eukaryota</taxon>
        <taxon>Metazoa</taxon>
        <taxon>Chordata</taxon>
        <taxon>Craniata</taxon>
        <taxon>Vertebrata</taxon>
        <taxon>Euteleostomi</taxon>
        <taxon>Mammalia</taxon>
        <taxon>Eutheria</taxon>
        <taxon>Euarchontoglires</taxon>
        <taxon>Glires</taxon>
        <taxon>Rodentia</taxon>
        <taxon>Myomorpha</taxon>
        <taxon>Muroidea</taxon>
        <taxon>Muridae</taxon>
        <taxon>Murinae</taxon>
        <taxon>Mus</taxon>
        <taxon>Mus</taxon>
    </lineage>
</organism>
<protein>
    <recommendedName>
        <fullName>Suppressor of SWI4 1 homolog</fullName>
        <shortName>Ssf-1</shortName>
    </recommendedName>
    <alternativeName>
        <fullName>Peter Pan homolog</fullName>
    </alternativeName>
</protein>
<keyword id="KW-0007">Acetylation</keyword>
<keyword id="KW-0539">Nucleus</keyword>
<keyword id="KW-0597">Phosphoprotein</keyword>
<keyword id="KW-1185">Reference proteome</keyword>
<dbReference type="EMBL" id="AK039027">
    <property type="protein sequence ID" value="BAC30210.1"/>
    <property type="molecule type" value="mRNA"/>
</dbReference>
<dbReference type="EMBL" id="CH466522">
    <property type="protein sequence ID" value="EDL25137.1"/>
    <property type="molecule type" value="Genomic_DNA"/>
</dbReference>
<dbReference type="EMBL" id="BC014688">
    <property type="protein sequence ID" value="AAH14688.1"/>
    <property type="molecule type" value="mRNA"/>
</dbReference>
<dbReference type="CCDS" id="CCDS22887.1"/>
<dbReference type="RefSeq" id="NP_663585.2">
    <property type="nucleotide sequence ID" value="NM_145610.2"/>
</dbReference>
<dbReference type="SMR" id="Q91YU8"/>
<dbReference type="BioGRID" id="231610">
    <property type="interactions" value="5"/>
</dbReference>
<dbReference type="FunCoup" id="Q91YU8">
    <property type="interactions" value="2873"/>
</dbReference>
<dbReference type="STRING" id="10090.ENSMUSP00000004203"/>
<dbReference type="iPTMnet" id="Q91YU8"/>
<dbReference type="PhosphoSitePlus" id="Q91YU8"/>
<dbReference type="jPOST" id="Q91YU8"/>
<dbReference type="PaxDb" id="10090-ENSMUSP00000004203"/>
<dbReference type="PeptideAtlas" id="Q91YU8"/>
<dbReference type="ProteomicsDB" id="258736"/>
<dbReference type="Pumba" id="Q91YU8"/>
<dbReference type="DNASU" id="235036"/>
<dbReference type="Ensembl" id="ENSMUST00000004203.6">
    <property type="protein sequence ID" value="ENSMUSP00000004203.6"/>
    <property type="gene ID" value="ENSMUSG00000004100.13"/>
</dbReference>
<dbReference type="GeneID" id="235036"/>
<dbReference type="KEGG" id="mmu:235036"/>
<dbReference type="UCSC" id="uc009ojk.2">
    <property type="organism name" value="mouse"/>
</dbReference>
<dbReference type="AGR" id="MGI:2178445"/>
<dbReference type="CTD" id="56342"/>
<dbReference type="MGI" id="MGI:2178445">
    <property type="gene designation" value="Ppan"/>
</dbReference>
<dbReference type="VEuPathDB" id="HostDB:ENSMUSG00000004100"/>
<dbReference type="eggNOG" id="KOG2963">
    <property type="taxonomic scope" value="Eukaryota"/>
</dbReference>
<dbReference type="GeneTree" id="ENSGT00530000064158"/>
<dbReference type="HOGENOM" id="CLU_026936_0_1_1"/>
<dbReference type="InParanoid" id="Q91YU8"/>
<dbReference type="OMA" id="KDYTVMT"/>
<dbReference type="OrthoDB" id="10261452at2759"/>
<dbReference type="PhylomeDB" id="Q91YU8"/>
<dbReference type="TreeFam" id="TF318923"/>
<dbReference type="BioGRID-ORCS" id="235036">
    <property type="hits" value="27 hits in 74 CRISPR screens"/>
</dbReference>
<dbReference type="ChiTaRS" id="Ppan">
    <property type="organism name" value="mouse"/>
</dbReference>
<dbReference type="PRO" id="PR:Q91YU8"/>
<dbReference type="Proteomes" id="UP000000589">
    <property type="component" value="Chromosome 9"/>
</dbReference>
<dbReference type="RNAct" id="Q91YU8">
    <property type="molecule type" value="protein"/>
</dbReference>
<dbReference type="Bgee" id="ENSMUSG00000004100">
    <property type="expression patterns" value="Expressed in yolk sac and 70 other cell types or tissues"/>
</dbReference>
<dbReference type="ExpressionAtlas" id="Q91YU8">
    <property type="expression patterns" value="baseline and differential"/>
</dbReference>
<dbReference type="GO" id="GO:0005730">
    <property type="term" value="C:nucleolus"/>
    <property type="evidence" value="ECO:0007669"/>
    <property type="project" value="UniProtKB-SubCell"/>
</dbReference>
<dbReference type="GO" id="GO:0005634">
    <property type="term" value="C:nucleus"/>
    <property type="evidence" value="ECO:0000266"/>
    <property type="project" value="MGI"/>
</dbReference>
<dbReference type="GO" id="GO:0019843">
    <property type="term" value="F:rRNA binding"/>
    <property type="evidence" value="ECO:0007669"/>
    <property type="project" value="InterPro"/>
</dbReference>
<dbReference type="GO" id="GO:0001560">
    <property type="term" value="P:regulation of cell growth by extracellular stimulus"/>
    <property type="evidence" value="ECO:0000266"/>
    <property type="project" value="MGI"/>
</dbReference>
<dbReference type="GO" id="GO:0006364">
    <property type="term" value="P:rRNA processing"/>
    <property type="evidence" value="ECO:0007669"/>
    <property type="project" value="InterPro"/>
</dbReference>
<dbReference type="InterPro" id="IPR007109">
    <property type="entry name" value="Brix"/>
</dbReference>
<dbReference type="InterPro" id="IPR045112">
    <property type="entry name" value="PPAN-like"/>
</dbReference>
<dbReference type="PANTHER" id="PTHR12661">
    <property type="entry name" value="PETER PAN-RELATED"/>
    <property type="match status" value="1"/>
</dbReference>
<dbReference type="PANTHER" id="PTHR12661:SF5">
    <property type="entry name" value="SUPPRESSOR OF SWI4 1 HOMOLOG"/>
    <property type="match status" value="1"/>
</dbReference>
<dbReference type="Pfam" id="PF04427">
    <property type="entry name" value="Brix"/>
    <property type="match status" value="1"/>
</dbReference>
<dbReference type="SMART" id="SM00879">
    <property type="entry name" value="Brix"/>
    <property type="match status" value="1"/>
</dbReference>
<dbReference type="SUPFAM" id="SSF52954">
    <property type="entry name" value="Class II aaRS ABD-related"/>
    <property type="match status" value="1"/>
</dbReference>
<dbReference type="PROSITE" id="PS50833">
    <property type="entry name" value="BRIX"/>
    <property type="match status" value="1"/>
</dbReference>
<feature type="chain" id="PRO_0000120258" description="Suppressor of SWI4 1 homolog">
    <location>
        <begin position="1"/>
        <end position="470"/>
    </location>
</feature>
<feature type="domain" description="Brix" evidence="2">
    <location>
        <begin position="29"/>
        <end position="292"/>
    </location>
</feature>
<feature type="region of interest" description="Disordered" evidence="3">
    <location>
        <begin position="240"/>
        <end position="264"/>
    </location>
</feature>
<feature type="region of interest" description="Disordered" evidence="3">
    <location>
        <begin position="323"/>
        <end position="470"/>
    </location>
</feature>
<feature type="compositionally biased region" description="Basic residues" evidence="3">
    <location>
        <begin position="342"/>
        <end position="355"/>
    </location>
</feature>
<feature type="compositionally biased region" description="Basic residues" evidence="3">
    <location>
        <begin position="447"/>
        <end position="457"/>
    </location>
</feature>
<feature type="modified residue" description="Phosphoserine" evidence="5">
    <location>
        <position position="238"/>
    </location>
</feature>
<feature type="modified residue" description="Phosphoserine" evidence="5">
    <location>
        <position position="240"/>
    </location>
</feature>
<feature type="modified residue" description="Phosphoserine" evidence="5">
    <location>
        <position position="362"/>
    </location>
</feature>
<feature type="modified residue" description="N6-acetyllysine" evidence="6">
    <location>
        <position position="441"/>
    </location>
</feature>
<feature type="sequence conflict" description="In Ref. 3; AAH14688." evidence="4" ref="3">
    <original>Q</original>
    <variation>P</variation>
    <location>
        <position position="411"/>
    </location>
</feature>
<gene>
    <name type="primary">Ppan</name>
    <name type="synonym">Ssf1</name>
</gene>
<accession>Q91YU8</accession>
<accession>Q8BYM4</accession>
<evidence type="ECO:0000250" key="1"/>
<evidence type="ECO:0000255" key="2">
    <source>
        <dbReference type="PROSITE-ProRule" id="PRU00034"/>
    </source>
</evidence>
<evidence type="ECO:0000256" key="3">
    <source>
        <dbReference type="SAM" id="MobiDB-lite"/>
    </source>
</evidence>
<evidence type="ECO:0000305" key="4"/>
<evidence type="ECO:0007744" key="5">
    <source>
    </source>
</evidence>
<evidence type="ECO:0007744" key="6">
    <source>
    </source>
</evidence>
<name>SSF1_MOUSE</name>
<proteinExistence type="evidence at protein level"/>
<comment type="function">
    <text evidence="1">May have a role in cell growth.</text>
</comment>
<comment type="subcellular location">
    <subcellularLocation>
        <location evidence="1">Nucleus</location>
        <location evidence="1">Nucleolus</location>
    </subcellularLocation>
</comment>
<sequence length="470" mass="52756">MGQSGRSRHQKRNRAQAQLRNLESYAAQPHSFVFTRGRAGRNVRQLSLDVRRVMEPLTATRLQVRKKNSLKDCVAVAGPLGVTHFLILTKTDNSVYLKLMRLPGGPTLTFQISKYTLIRDVVSSLRRHRMHEQQFNHPPLLVLNSFGPQGMHIKLMATMFQNLFPSINVHTVNLNTIKRCLLINYNPDSQELDFRHYSVKVVPVGASRGMKKLLQEKFPNMSRLQDISELLATGVGLSDSEVEPDGEHNTTELPQAVAGRGNMQAQQSAVRLTEIGPRMTLQLIKIQEGVGNGNVLFHSFVHKTEEELQAILAAKEEKLRLKAQRQNQQAENLQRKQELREAHKKKSLAGIKRARARADGDSDAEDPGAPPEAVGAGQPEDEEDDAEYFRQAVGEEPDEDLFPTAAKRRRQGGPLGKKQRGKEQRPGNKGRGQGGNWQALKLQGRSQRGKAKPRPRATHQDSRPASRRRN</sequence>
<reference key="1">
    <citation type="journal article" date="2005" name="Science">
        <title>The transcriptional landscape of the mammalian genome.</title>
        <authorList>
            <person name="Carninci P."/>
            <person name="Kasukawa T."/>
            <person name="Katayama S."/>
            <person name="Gough J."/>
            <person name="Frith M.C."/>
            <person name="Maeda N."/>
            <person name="Oyama R."/>
            <person name="Ravasi T."/>
            <person name="Lenhard B."/>
            <person name="Wells C."/>
            <person name="Kodzius R."/>
            <person name="Shimokawa K."/>
            <person name="Bajic V.B."/>
            <person name="Brenner S.E."/>
            <person name="Batalov S."/>
            <person name="Forrest A.R."/>
            <person name="Zavolan M."/>
            <person name="Davis M.J."/>
            <person name="Wilming L.G."/>
            <person name="Aidinis V."/>
            <person name="Allen J.E."/>
            <person name="Ambesi-Impiombato A."/>
            <person name="Apweiler R."/>
            <person name="Aturaliya R.N."/>
            <person name="Bailey T.L."/>
            <person name="Bansal M."/>
            <person name="Baxter L."/>
            <person name="Beisel K.W."/>
            <person name="Bersano T."/>
            <person name="Bono H."/>
            <person name="Chalk A.M."/>
            <person name="Chiu K.P."/>
            <person name="Choudhary V."/>
            <person name="Christoffels A."/>
            <person name="Clutterbuck D.R."/>
            <person name="Crowe M.L."/>
            <person name="Dalla E."/>
            <person name="Dalrymple B.P."/>
            <person name="de Bono B."/>
            <person name="Della Gatta G."/>
            <person name="di Bernardo D."/>
            <person name="Down T."/>
            <person name="Engstrom P."/>
            <person name="Fagiolini M."/>
            <person name="Faulkner G."/>
            <person name="Fletcher C.F."/>
            <person name="Fukushima T."/>
            <person name="Furuno M."/>
            <person name="Futaki S."/>
            <person name="Gariboldi M."/>
            <person name="Georgii-Hemming P."/>
            <person name="Gingeras T.R."/>
            <person name="Gojobori T."/>
            <person name="Green R.E."/>
            <person name="Gustincich S."/>
            <person name="Harbers M."/>
            <person name="Hayashi Y."/>
            <person name="Hensch T.K."/>
            <person name="Hirokawa N."/>
            <person name="Hill D."/>
            <person name="Huminiecki L."/>
            <person name="Iacono M."/>
            <person name="Ikeo K."/>
            <person name="Iwama A."/>
            <person name="Ishikawa T."/>
            <person name="Jakt M."/>
            <person name="Kanapin A."/>
            <person name="Katoh M."/>
            <person name="Kawasawa Y."/>
            <person name="Kelso J."/>
            <person name="Kitamura H."/>
            <person name="Kitano H."/>
            <person name="Kollias G."/>
            <person name="Krishnan S.P."/>
            <person name="Kruger A."/>
            <person name="Kummerfeld S.K."/>
            <person name="Kurochkin I.V."/>
            <person name="Lareau L.F."/>
            <person name="Lazarevic D."/>
            <person name="Lipovich L."/>
            <person name="Liu J."/>
            <person name="Liuni S."/>
            <person name="McWilliam S."/>
            <person name="Madan Babu M."/>
            <person name="Madera M."/>
            <person name="Marchionni L."/>
            <person name="Matsuda H."/>
            <person name="Matsuzawa S."/>
            <person name="Miki H."/>
            <person name="Mignone F."/>
            <person name="Miyake S."/>
            <person name="Morris K."/>
            <person name="Mottagui-Tabar S."/>
            <person name="Mulder N."/>
            <person name="Nakano N."/>
            <person name="Nakauchi H."/>
            <person name="Ng P."/>
            <person name="Nilsson R."/>
            <person name="Nishiguchi S."/>
            <person name="Nishikawa S."/>
            <person name="Nori F."/>
            <person name="Ohara O."/>
            <person name="Okazaki Y."/>
            <person name="Orlando V."/>
            <person name="Pang K.C."/>
            <person name="Pavan W.J."/>
            <person name="Pavesi G."/>
            <person name="Pesole G."/>
            <person name="Petrovsky N."/>
            <person name="Piazza S."/>
            <person name="Reed J."/>
            <person name="Reid J.F."/>
            <person name="Ring B.Z."/>
            <person name="Ringwald M."/>
            <person name="Rost B."/>
            <person name="Ruan Y."/>
            <person name="Salzberg S.L."/>
            <person name="Sandelin A."/>
            <person name="Schneider C."/>
            <person name="Schoenbach C."/>
            <person name="Sekiguchi K."/>
            <person name="Semple C.A."/>
            <person name="Seno S."/>
            <person name="Sessa L."/>
            <person name="Sheng Y."/>
            <person name="Shibata Y."/>
            <person name="Shimada H."/>
            <person name="Shimada K."/>
            <person name="Silva D."/>
            <person name="Sinclair B."/>
            <person name="Sperling S."/>
            <person name="Stupka E."/>
            <person name="Sugiura K."/>
            <person name="Sultana R."/>
            <person name="Takenaka Y."/>
            <person name="Taki K."/>
            <person name="Tammoja K."/>
            <person name="Tan S.L."/>
            <person name="Tang S."/>
            <person name="Taylor M.S."/>
            <person name="Tegner J."/>
            <person name="Teichmann S.A."/>
            <person name="Ueda H.R."/>
            <person name="van Nimwegen E."/>
            <person name="Verardo R."/>
            <person name="Wei C.L."/>
            <person name="Yagi K."/>
            <person name="Yamanishi H."/>
            <person name="Zabarovsky E."/>
            <person name="Zhu S."/>
            <person name="Zimmer A."/>
            <person name="Hide W."/>
            <person name="Bult C."/>
            <person name="Grimmond S.M."/>
            <person name="Teasdale R.D."/>
            <person name="Liu E.T."/>
            <person name="Brusic V."/>
            <person name="Quackenbush J."/>
            <person name="Wahlestedt C."/>
            <person name="Mattick J.S."/>
            <person name="Hume D.A."/>
            <person name="Kai C."/>
            <person name="Sasaki D."/>
            <person name="Tomaru Y."/>
            <person name="Fukuda S."/>
            <person name="Kanamori-Katayama M."/>
            <person name="Suzuki M."/>
            <person name="Aoki J."/>
            <person name="Arakawa T."/>
            <person name="Iida J."/>
            <person name="Imamura K."/>
            <person name="Itoh M."/>
            <person name="Kato T."/>
            <person name="Kawaji H."/>
            <person name="Kawagashira N."/>
            <person name="Kawashima T."/>
            <person name="Kojima M."/>
            <person name="Kondo S."/>
            <person name="Konno H."/>
            <person name="Nakano K."/>
            <person name="Ninomiya N."/>
            <person name="Nishio T."/>
            <person name="Okada M."/>
            <person name="Plessy C."/>
            <person name="Shibata K."/>
            <person name="Shiraki T."/>
            <person name="Suzuki S."/>
            <person name="Tagami M."/>
            <person name="Waki K."/>
            <person name="Watahiki A."/>
            <person name="Okamura-Oho Y."/>
            <person name="Suzuki H."/>
            <person name="Kawai J."/>
            <person name="Hayashizaki Y."/>
        </authorList>
    </citation>
    <scope>NUCLEOTIDE SEQUENCE [LARGE SCALE MRNA]</scope>
    <source>
        <strain>C57BL/6J</strain>
        <tissue>Hypothalamus</tissue>
    </source>
</reference>
<reference key="2">
    <citation type="submission" date="2005-07" db="EMBL/GenBank/DDBJ databases">
        <authorList>
            <person name="Mural R.J."/>
            <person name="Adams M.D."/>
            <person name="Myers E.W."/>
            <person name="Smith H.O."/>
            <person name="Venter J.C."/>
        </authorList>
    </citation>
    <scope>NUCLEOTIDE SEQUENCE [LARGE SCALE GENOMIC DNA]</scope>
</reference>
<reference key="3">
    <citation type="journal article" date="2004" name="Genome Res.">
        <title>The status, quality, and expansion of the NIH full-length cDNA project: the Mammalian Gene Collection (MGC).</title>
        <authorList>
            <consortium name="The MGC Project Team"/>
        </authorList>
    </citation>
    <scope>NUCLEOTIDE SEQUENCE [LARGE SCALE MRNA]</scope>
    <source>
        <tissue>Mammary tumor</tissue>
    </source>
</reference>
<reference key="4">
    <citation type="journal article" date="2010" name="Cell">
        <title>A tissue-specific atlas of mouse protein phosphorylation and expression.</title>
        <authorList>
            <person name="Huttlin E.L."/>
            <person name="Jedrychowski M.P."/>
            <person name="Elias J.E."/>
            <person name="Goswami T."/>
            <person name="Rad R."/>
            <person name="Beausoleil S.A."/>
            <person name="Villen J."/>
            <person name="Haas W."/>
            <person name="Sowa M.E."/>
            <person name="Gygi S.P."/>
        </authorList>
    </citation>
    <scope>PHOSPHORYLATION [LARGE SCALE ANALYSIS] AT SER-238; SER-240 AND SER-362</scope>
    <scope>IDENTIFICATION BY MASS SPECTROMETRY [LARGE SCALE ANALYSIS]</scope>
    <source>
        <tissue>Brain</tissue>
        <tissue>Kidney</tissue>
        <tissue>Liver</tissue>
        <tissue>Pancreas</tissue>
        <tissue>Spleen</tissue>
        <tissue>Testis</tissue>
    </source>
</reference>
<reference key="5">
    <citation type="journal article" date="2013" name="Mol. Cell">
        <title>SIRT5-mediated lysine desuccinylation impacts diverse metabolic pathways.</title>
        <authorList>
            <person name="Park J."/>
            <person name="Chen Y."/>
            <person name="Tishkoff D.X."/>
            <person name="Peng C."/>
            <person name="Tan M."/>
            <person name="Dai L."/>
            <person name="Xie Z."/>
            <person name="Zhang Y."/>
            <person name="Zwaans B.M."/>
            <person name="Skinner M.E."/>
            <person name="Lombard D.B."/>
            <person name="Zhao Y."/>
        </authorList>
    </citation>
    <scope>ACETYLATION [LARGE SCALE ANALYSIS] AT LYS-441</scope>
    <scope>IDENTIFICATION BY MASS SPECTROMETRY [LARGE SCALE ANALYSIS]</scope>
    <source>
        <tissue>Embryonic fibroblast</tissue>
    </source>
</reference>